<feature type="chain" id="PRO_0000258622" description="Small ribosomal subunit protein eS6">
    <location>
        <begin position="1"/>
        <end position="135"/>
    </location>
</feature>
<organism>
    <name type="scientific">Methanococcoides burtonii (strain DSM 6242 / NBRC 107633 / OCM 468 / ACE-M)</name>
    <dbReference type="NCBI Taxonomy" id="259564"/>
    <lineage>
        <taxon>Archaea</taxon>
        <taxon>Methanobacteriati</taxon>
        <taxon>Methanobacteriota</taxon>
        <taxon>Stenosarchaea group</taxon>
        <taxon>Methanomicrobia</taxon>
        <taxon>Methanosarcinales</taxon>
        <taxon>Methanosarcinaceae</taxon>
        <taxon>Methanococcoides</taxon>
    </lineage>
</organism>
<dbReference type="EMBL" id="CP000300">
    <property type="protein sequence ID" value="ABE51234.1"/>
    <property type="molecule type" value="Genomic_DNA"/>
</dbReference>
<dbReference type="RefSeq" id="WP_011498396.1">
    <property type="nucleotide sequence ID" value="NC_007955.1"/>
</dbReference>
<dbReference type="SMR" id="Q12Z92"/>
<dbReference type="STRING" id="259564.Mbur_0224"/>
<dbReference type="GeneID" id="3997660"/>
<dbReference type="KEGG" id="mbu:Mbur_0224"/>
<dbReference type="HOGENOM" id="CLU_109671_1_1_2"/>
<dbReference type="OrthoDB" id="7793at2157"/>
<dbReference type="Proteomes" id="UP000001979">
    <property type="component" value="Chromosome"/>
</dbReference>
<dbReference type="GO" id="GO:1990904">
    <property type="term" value="C:ribonucleoprotein complex"/>
    <property type="evidence" value="ECO:0007669"/>
    <property type="project" value="UniProtKB-KW"/>
</dbReference>
<dbReference type="GO" id="GO:0005840">
    <property type="term" value="C:ribosome"/>
    <property type="evidence" value="ECO:0007669"/>
    <property type="project" value="UniProtKB-KW"/>
</dbReference>
<dbReference type="GO" id="GO:0003735">
    <property type="term" value="F:structural constituent of ribosome"/>
    <property type="evidence" value="ECO:0007669"/>
    <property type="project" value="InterPro"/>
</dbReference>
<dbReference type="GO" id="GO:0006412">
    <property type="term" value="P:translation"/>
    <property type="evidence" value="ECO:0007669"/>
    <property type="project" value="UniProtKB-UniRule"/>
</dbReference>
<dbReference type="HAMAP" id="MF_00512">
    <property type="entry name" value="Ribosomal_eS6"/>
    <property type="match status" value="1"/>
</dbReference>
<dbReference type="InterPro" id="IPR001377">
    <property type="entry name" value="Ribosomal_eS6"/>
</dbReference>
<dbReference type="InterPro" id="IPR020924">
    <property type="entry name" value="Ribosomal_eS6_arc"/>
</dbReference>
<dbReference type="InterPro" id="IPR018282">
    <property type="entry name" value="Ribosomal_eS6_CS"/>
</dbReference>
<dbReference type="NCBIfam" id="NF003294">
    <property type="entry name" value="PRK04290.1-3"/>
    <property type="match status" value="1"/>
</dbReference>
<dbReference type="PANTHER" id="PTHR11502">
    <property type="entry name" value="40S RIBOSOMAL PROTEIN S6"/>
    <property type="match status" value="1"/>
</dbReference>
<dbReference type="Pfam" id="PF01092">
    <property type="entry name" value="Ribosomal_S6e"/>
    <property type="match status" value="1"/>
</dbReference>
<dbReference type="SMART" id="SM01405">
    <property type="entry name" value="Ribosomal_S6e"/>
    <property type="match status" value="1"/>
</dbReference>
<dbReference type="PROSITE" id="PS00578">
    <property type="entry name" value="RIBOSOMAL_S6E"/>
    <property type="match status" value="1"/>
</dbReference>
<reference key="1">
    <citation type="journal article" date="2009" name="ISME J.">
        <title>The genome sequence of the psychrophilic archaeon, Methanococcoides burtonii: the role of genome evolution in cold adaptation.</title>
        <authorList>
            <person name="Allen M.A."/>
            <person name="Lauro F.M."/>
            <person name="Williams T.J."/>
            <person name="Burg D."/>
            <person name="Siddiqui K.S."/>
            <person name="De Francisci D."/>
            <person name="Chong K.W."/>
            <person name="Pilak O."/>
            <person name="Chew H.H."/>
            <person name="De Maere M.Z."/>
            <person name="Ting L."/>
            <person name="Katrib M."/>
            <person name="Ng C."/>
            <person name="Sowers K.R."/>
            <person name="Galperin M.Y."/>
            <person name="Anderson I.J."/>
            <person name="Ivanova N."/>
            <person name="Dalin E."/>
            <person name="Martinez M."/>
            <person name="Lapidus A."/>
            <person name="Hauser L."/>
            <person name="Land M."/>
            <person name="Thomas T."/>
            <person name="Cavicchioli R."/>
        </authorList>
    </citation>
    <scope>NUCLEOTIDE SEQUENCE [LARGE SCALE GENOMIC DNA]</scope>
    <source>
        <strain>DSM 6242 / NBRC 107633 / OCM 468 / ACE-M</strain>
    </source>
</reference>
<comment type="similarity">
    <text evidence="1">Belongs to the eukaryotic ribosomal protein eS6 family.</text>
</comment>
<sequence>MADFKIVVSDPKTKTYQFDITGAEANQFIGRSIGQTVDGATVGLDGYTLTITGGTDNSGFVMSPTLPGPRRQKVLIANGVGYSAVAKGVRRRKFLRGSEVAPDITQINTKVTGYSDKAIEEILGGGSEEVEAPAE</sequence>
<name>RS6E_METBU</name>
<protein>
    <recommendedName>
        <fullName evidence="1">Small ribosomal subunit protein eS6</fullName>
    </recommendedName>
    <alternativeName>
        <fullName evidence="2">30S ribosomal protein S6e</fullName>
    </alternativeName>
</protein>
<proteinExistence type="inferred from homology"/>
<evidence type="ECO:0000255" key="1">
    <source>
        <dbReference type="HAMAP-Rule" id="MF_00512"/>
    </source>
</evidence>
<evidence type="ECO:0000305" key="2"/>
<accession>Q12Z92</accession>
<gene>
    <name evidence="1" type="primary">rps6e</name>
    <name type="ordered locus">Mbur_0224</name>
</gene>
<keyword id="KW-0687">Ribonucleoprotein</keyword>
<keyword id="KW-0689">Ribosomal protein</keyword>